<organism>
    <name type="scientific">Arabidopsis thaliana</name>
    <name type="common">Mouse-ear cress</name>
    <dbReference type="NCBI Taxonomy" id="3702"/>
    <lineage>
        <taxon>Eukaryota</taxon>
        <taxon>Viridiplantae</taxon>
        <taxon>Streptophyta</taxon>
        <taxon>Embryophyta</taxon>
        <taxon>Tracheophyta</taxon>
        <taxon>Spermatophyta</taxon>
        <taxon>Magnoliopsida</taxon>
        <taxon>eudicotyledons</taxon>
        <taxon>Gunneridae</taxon>
        <taxon>Pentapetalae</taxon>
        <taxon>rosids</taxon>
        <taxon>malvids</taxon>
        <taxon>Brassicales</taxon>
        <taxon>Brassicaceae</taxon>
        <taxon>Camelineae</taxon>
        <taxon>Arabidopsis</taxon>
    </lineage>
</organism>
<sequence>MMEVLLRLLVTQVILLALATSFVSCYDPNPLQDFCVAASETNRVFVNGKFCKDPKSVTANDFSYSGLNIARNTTNFLGSNVTTVDVNKIPGLNTLGVSLARLDFAQGGQNPPHIHPRATEILVVTKGKLLVGFVSSNQDNNRLFYKVLKRGDVFVFPIGLIHFQMNVRRTRAVAFAGFGSQNPGTIRIADAVFGSNPSIPQEVLAKAFQLDVKLVRFLHIVFGPPLW</sequence>
<gene>
    <name type="ordered locus">At3g04200</name>
    <name type="ORF">T6K12.18</name>
</gene>
<proteinExistence type="evidence at transcript level"/>
<protein>
    <recommendedName>
        <fullName>Germin-like protein subfamily 1 member 6</fullName>
    </recommendedName>
</protein>
<comment type="function">
    <text>May play a role in plant defense. Probably has no oxalate oxidase activity even if the active site is conserved.</text>
</comment>
<comment type="subunit">
    <text evidence="1">Oligomer (believed to be a pentamer but probably hexamer).</text>
</comment>
<comment type="subcellular location">
    <subcellularLocation>
        <location evidence="1">Secreted</location>
        <location evidence="1">Extracellular space</location>
        <location evidence="1">Apoplast</location>
    </subcellularLocation>
</comment>
<comment type="similarity">
    <text evidence="3">Belongs to the germin family.</text>
</comment>
<reference key="1">
    <citation type="journal article" date="2000" name="Nature">
        <title>Sequence and analysis of chromosome 3 of the plant Arabidopsis thaliana.</title>
        <authorList>
            <person name="Salanoubat M."/>
            <person name="Lemcke K."/>
            <person name="Rieger M."/>
            <person name="Ansorge W."/>
            <person name="Unseld M."/>
            <person name="Fartmann B."/>
            <person name="Valle G."/>
            <person name="Bloecker H."/>
            <person name="Perez-Alonso M."/>
            <person name="Obermaier B."/>
            <person name="Delseny M."/>
            <person name="Boutry M."/>
            <person name="Grivell L.A."/>
            <person name="Mache R."/>
            <person name="Puigdomenech P."/>
            <person name="De Simone V."/>
            <person name="Choisne N."/>
            <person name="Artiguenave F."/>
            <person name="Robert C."/>
            <person name="Brottier P."/>
            <person name="Wincker P."/>
            <person name="Cattolico L."/>
            <person name="Weissenbach J."/>
            <person name="Saurin W."/>
            <person name="Quetier F."/>
            <person name="Schaefer M."/>
            <person name="Mueller-Auer S."/>
            <person name="Gabel C."/>
            <person name="Fuchs M."/>
            <person name="Benes V."/>
            <person name="Wurmbach E."/>
            <person name="Drzonek H."/>
            <person name="Erfle H."/>
            <person name="Jordan N."/>
            <person name="Bangert S."/>
            <person name="Wiedelmann R."/>
            <person name="Kranz H."/>
            <person name="Voss H."/>
            <person name="Holland R."/>
            <person name="Brandt P."/>
            <person name="Nyakatura G."/>
            <person name="Vezzi A."/>
            <person name="D'Angelo M."/>
            <person name="Pallavicini A."/>
            <person name="Toppo S."/>
            <person name="Simionati B."/>
            <person name="Conrad A."/>
            <person name="Hornischer K."/>
            <person name="Kauer G."/>
            <person name="Loehnert T.-H."/>
            <person name="Nordsiek G."/>
            <person name="Reichelt J."/>
            <person name="Scharfe M."/>
            <person name="Schoen O."/>
            <person name="Bargues M."/>
            <person name="Terol J."/>
            <person name="Climent J."/>
            <person name="Navarro P."/>
            <person name="Collado C."/>
            <person name="Perez-Perez A."/>
            <person name="Ottenwaelder B."/>
            <person name="Duchemin D."/>
            <person name="Cooke R."/>
            <person name="Laudie M."/>
            <person name="Berger-Llauro C."/>
            <person name="Purnelle B."/>
            <person name="Masuy D."/>
            <person name="de Haan M."/>
            <person name="Maarse A.C."/>
            <person name="Alcaraz J.-P."/>
            <person name="Cottet A."/>
            <person name="Casacuberta E."/>
            <person name="Monfort A."/>
            <person name="Argiriou A."/>
            <person name="Flores M."/>
            <person name="Liguori R."/>
            <person name="Vitale D."/>
            <person name="Mannhaupt G."/>
            <person name="Haase D."/>
            <person name="Schoof H."/>
            <person name="Rudd S."/>
            <person name="Zaccaria P."/>
            <person name="Mewes H.-W."/>
            <person name="Mayer K.F.X."/>
            <person name="Kaul S."/>
            <person name="Town C.D."/>
            <person name="Koo H.L."/>
            <person name="Tallon L.J."/>
            <person name="Jenkins J."/>
            <person name="Rooney T."/>
            <person name="Rizzo M."/>
            <person name="Walts A."/>
            <person name="Utterback T."/>
            <person name="Fujii C.Y."/>
            <person name="Shea T.P."/>
            <person name="Creasy T.H."/>
            <person name="Haas B."/>
            <person name="Maiti R."/>
            <person name="Wu D."/>
            <person name="Peterson J."/>
            <person name="Van Aken S."/>
            <person name="Pai G."/>
            <person name="Militscher J."/>
            <person name="Sellers P."/>
            <person name="Gill J.E."/>
            <person name="Feldblyum T.V."/>
            <person name="Preuss D."/>
            <person name="Lin X."/>
            <person name="Nierman W.C."/>
            <person name="Salzberg S.L."/>
            <person name="White O."/>
            <person name="Venter J.C."/>
            <person name="Fraser C.M."/>
            <person name="Kaneko T."/>
            <person name="Nakamura Y."/>
            <person name="Sato S."/>
            <person name="Kato T."/>
            <person name="Asamizu E."/>
            <person name="Sasamoto S."/>
            <person name="Kimura T."/>
            <person name="Idesawa K."/>
            <person name="Kawashima K."/>
            <person name="Kishida Y."/>
            <person name="Kiyokawa C."/>
            <person name="Kohara M."/>
            <person name="Matsumoto M."/>
            <person name="Matsuno A."/>
            <person name="Muraki A."/>
            <person name="Nakayama S."/>
            <person name="Nakazaki N."/>
            <person name="Shinpo S."/>
            <person name="Takeuchi C."/>
            <person name="Wada T."/>
            <person name="Watanabe A."/>
            <person name="Yamada M."/>
            <person name="Yasuda M."/>
            <person name="Tabata S."/>
        </authorList>
    </citation>
    <scope>NUCLEOTIDE SEQUENCE [LARGE SCALE GENOMIC DNA]</scope>
    <source>
        <strain>cv. Columbia</strain>
    </source>
</reference>
<reference key="2">
    <citation type="journal article" date="2017" name="Plant J.">
        <title>Araport11: a complete reannotation of the Arabidopsis thaliana reference genome.</title>
        <authorList>
            <person name="Cheng C.Y."/>
            <person name="Krishnakumar V."/>
            <person name="Chan A.P."/>
            <person name="Thibaud-Nissen F."/>
            <person name="Schobel S."/>
            <person name="Town C.D."/>
        </authorList>
    </citation>
    <scope>GENOME REANNOTATION</scope>
    <source>
        <strain>cv. Columbia</strain>
    </source>
</reference>
<reference key="3">
    <citation type="journal article" date="2003" name="Science">
        <title>Empirical analysis of transcriptional activity in the Arabidopsis genome.</title>
        <authorList>
            <person name="Yamada K."/>
            <person name="Lim J."/>
            <person name="Dale J.M."/>
            <person name="Chen H."/>
            <person name="Shinn P."/>
            <person name="Palm C.J."/>
            <person name="Southwick A.M."/>
            <person name="Wu H.C."/>
            <person name="Kim C.J."/>
            <person name="Nguyen M."/>
            <person name="Pham P.K."/>
            <person name="Cheuk R.F."/>
            <person name="Karlin-Newmann G."/>
            <person name="Liu S.X."/>
            <person name="Lam B."/>
            <person name="Sakano H."/>
            <person name="Wu T."/>
            <person name="Yu G."/>
            <person name="Miranda M."/>
            <person name="Quach H.L."/>
            <person name="Tripp M."/>
            <person name="Chang C.H."/>
            <person name="Lee J.M."/>
            <person name="Toriumi M.J."/>
            <person name="Chan M.M."/>
            <person name="Tang C.C."/>
            <person name="Onodera C.S."/>
            <person name="Deng J.M."/>
            <person name="Akiyama K."/>
            <person name="Ansari Y."/>
            <person name="Arakawa T."/>
            <person name="Banh J."/>
            <person name="Banno F."/>
            <person name="Bowser L."/>
            <person name="Brooks S.Y."/>
            <person name="Carninci P."/>
            <person name="Chao Q."/>
            <person name="Choy N."/>
            <person name="Enju A."/>
            <person name="Goldsmith A.D."/>
            <person name="Gurjal M."/>
            <person name="Hansen N.F."/>
            <person name="Hayashizaki Y."/>
            <person name="Johnson-Hopson C."/>
            <person name="Hsuan V.W."/>
            <person name="Iida K."/>
            <person name="Karnes M."/>
            <person name="Khan S."/>
            <person name="Koesema E."/>
            <person name="Ishida J."/>
            <person name="Jiang P.X."/>
            <person name="Jones T."/>
            <person name="Kawai J."/>
            <person name="Kamiya A."/>
            <person name="Meyers C."/>
            <person name="Nakajima M."/>
            <person name="Narusaka M."/>
            <person name="Seki M."/>
            <person name="Sakurai T."/>
            <person name="Satou M."/>
            <person name="Tamse R."/>
            <person name="Vaysberg M."/>
            <person name="Wallender E.K."/>
            <person name="Wong C."/>
            <person name="Yamamura Y."/>
            <person name="Yuan S."/>
            <person name="Shinozaki K."/>
            <person name="Davis R.W."/>
            <person name="Theologis A."/>
            <person name="Ecker J.R."/>
        </authorList>
    </citation>
    <scope>NUCLEOTIDE SEQUENCE [LARGE SCALE MRNA]</scope>
    <source>
        <strain>cv. Columbia</strain>
    </source>
</reference>
<name>GL16_ARATH</name>
<dbReference type="EMBL" id="AC016829">
    <property type="protein sequence ID" value="AAF26793.1"/>
    <property type="molecule type" value="Genomic_DNA"/>
</dbReference>
<dbReference type="EMBL" id="CP002686">
    <property type="protein sequence ID" value="AEE74052.1"/>
    <property type="molecule type" value="Genomic_DNA"/>
</dbReference>
<dbReference type="EMBL" id="BT002896">
    <property type="protein sequence ID" value="AAO22712.1"/>
    <property type="molecule type" value="mRNA"/>
</dbReference>
<dbReference type="EMBL" id="BT004466">
    <property type="protein sequence ID" value="AAO42460.1"/>
    <property type="molecule type" value="mRNA"/>
</dbReference>
<dbReference type="RefSeq" id="NP_187070.1">
    <property type="nucleotide sequence ID" value="NM_111291.4"/>
</dbReference>
<dbReference type="SMR" id="Q9M8X6"/>
<dbReference type="FunCoup" id="Q9M8X6">
    <property type="interactions" value="33"/>
</dbReference>
<dbReference type="GlyGen" id="Q9M8X6">
    <property type="glycosylation" value="2 sites"/>
</dbReference>
<dbReference type="iPTMnet" id="Q9M8X6"/>
<dbReference type="PaxDb" id="3702-AT3G04200.1"/>
<dbReference type="ProteomicsDB" id="230465"/>
<dbReference type="EnsemblPlants" id="AT3G04200.1">
    <property type="protein sequence ID" value="AT3G04200.1"/>
    <property type="gene ID" value="AT3G04200"/>
</dbReference>
<dbReference type="GeneID" id="819575"/>
<dbReference type="Gramene" id="AT3G04200.1">
    <property type="protein sequence ID" value="AT3G04200.1"/>
    <property type="gene ID" value="AT3G04200"/>
</dbReference>
<dbReference type="KEGG" id="ath:AT3G04200"/>
<dbReference type="Araport" id="AT3G04200"/>
<dbReference type="TAIR" id="AT3G04200"/>
<dbReference type="eggNOG" id="ENOG502QQ4A">
    <property type="taxonomic scope" value="Eukaryota"/>
</dbReference>
<dbReference type="HOGENOM" id="CLU_015790_0_0_1"/>
<dbReference type="InParanoid" id="Q9M8X6"/>
<dbReference type="OMA" id="WLWPIAT"/>
<dbReference type="PhylomeDB" id="Q9M8X6"/>
<dbReference type="PRO" id="PR:Q9M8X6"/>
<dbReference type="Proteomes" id="UP000006548">
    <property type="component" value="Chromosome 3"/>
</dbReference>
<dbReference type="ExpressionAtlas" id="Q9M8X6">
    <property type="expression patterns" value="baseline and differential"/>
</dbReference>
<dbReference type="GO" id="GO:0048046">
    <property type="term" value="C:apoplast"/>
    <property type="evidence" value="ECO:0007669"/>
    <property type="project" value="UniProtKB-SubCell"/>
</dbReference>
<dbReference type="GO" id="GO:0030145">
    <property type="term" value="F:manganese ion binding"/>
    <property type="evidence" value="ECO:0007669"/>
    <property type="project" value="InterPro"/>
</dbReference>
<dbReference type="CDD" id="cd02241">
    <property type="entry name" value="cupin_OxOx"/>
    <property type="match status" value="1"/>
</dbReference>
<dbReference type="FunFam" id="2.60.120.10:FF:000005">
    <property type="entry name" value="Germin-like protein subfamily 1 member 8"/>
    <property type="match status" value="1"/>
</dbReference>
<dbReference type="Gene3D" id="2.60.120.10">
    <property type="entry name" value="Jelly Rolls"/>
    <property type="match status" value="1"/>
</dbReference>
<dbReference type="InterPro" id="IPR006045">
    <property type="entry name" value="Cupin_1"/>
</dbReference>
<dbReference type="InterPro" id="IPR001929">
    <property type="entry name" value="Germin"/>
</dbReference>
<dbReference type="InterPro" id="IPR019780">
    <property type="entry name" value="Germin_Mn-BS"/>
</dbReference>
<dbReference type="InterPro" id="IPR014710">
    <property type="entry name" value="RmlC-like_jellyroll"/>
</dbReference>
<dbReference type="InterPro" id="IPR011051">
    <property type="entry name" value="RmlC_Cupin_sf"/>
</dbReference>
<dbReference type="PANTHER" id="PTHR31238">
    <property type="entry name" value="GERMIN-LIKE PROTEIN SUBFAMILY 3 MEMBER 3"/>
    <property type="match status" value="1"/>
</dbReference>
<dbReference type="Pfam" id="PF00190">
    <property type="entry name" value="Cupin_1"/>
    <property type="match status" value="1"/>
</dbReference>
<dbReference type="PRINTS" id="PR00325">
    <property type="entry name" value="GERMIN"/>
</dbReference>
<dbReference type="SMART" id="SM00835">
    <property type="entry name" value="Cupin_1"/>
    <property type="match status" value="1"/>
</dbReference>
<dbReference type="SUPFAM" id="SSF51182">
    <property type="entry name" value="RmlC-like cupins"/>
    <property type="match status" value="1"/>
</dbReference>
<dbReference type="PROSITE" id="PS00725">
    <property type="entry name" value="GERMIN"/>
    <property type="match status" value="1"/>
</dbReference>
<keyword id="KW-0052">Apoplast</keyword>
<keyword id="KW-1015">Disulfide bond</keyword>
<keyword id="KW-0325">Glycoprotein</keyword>
<keyword id="KW-0464">Manganese</keyword>
<keyword id="KW-0479">Metal-binding</keyword>
<keyword id="KW-1185">Reference proteome</keyword>
<keyword id="KW-0964">Secreted</keyword>
<keyword id="KW-0732">Signal</keyword>
<evidence type="ECO:0000250" key="1"/>
<evidence type="ECO:0000255" key="2"/>
<evidence type="ECO:0000305" key="3"/>
<feature type="signal peptide" evidence="2">
    <location>
        <begin position="1"/>
        <end position="25"/>
    </location>
</feature>
<feature type="chain" id="PRO_0000010806" description="Germin-like protein subfamily 1 member 6">
    <location>
        <begin position="26"/>
        <end position="227"/>
    </location>
</feature>
<feature type="domain" description="Cupin type-1" evidence="2">
    <location>
        <begin position="65"/>
        <end position="216"/>
    </location>
</feature>
<feature type="binding site" evidence="1">
    <location>
        <position position="113"/>
    </location>
    <ligand>
        <name>Mn(2+)</name>
        <dbReference type="ChEBI" id="CHEBI:29035"/>
    </ligand>
</feature>
<feature type="binding site" evidence="1">
    <location>
        <position position="115"/>
    </location>
    <ligand>
        <name>Mn(2+)</name>
        <dbReference type="ChEBI" id="CHEBI:29035"/>
    </ligand>
</feature>
<feature type="binding site" evidence="1">
    <location>
        <position position="120"/>
    </location>
    <ligand>
        <name>Mn(2+)</name>
        <dbReference type="ChEBI" id="CHEBI:29035"/>
    </ligand>
</feature>
<feature type="binding site" evidence="1">
    <location>
        <position position="162"/>
    </location>
    <ligand>
        <name>Mn(2+)</name>
        <dbReference type="ChEBI" id="CHEBI:29035"/>
    </ligand>
</feature>
<feature type="glycosylation site" description="N-linked (GlcNAc...) asparagine" evidence="2">
    <location>
        <position position="72"/>
    </location>
</feature>
<feature type="glycosylation site" description="N-linked (GlcNAc...) asparagine" evidence="2">
    <location>
        <position position="80"/>
    </location>
</feature>
<feature type="disulfide bond" evidence="1">
    <location>
        <begin position="35"/>
        <end position="51"/>
    </location>
</feature>
<accession>Q9M8X6</accession>